<protein>
    <recommendedName>
        <fullName evidence="1">Tetraacyldisaccharide 4'-kinase</fullName>
        <ecNumber evidence="1">2.7.1.130</ecNumber>
    </recommendedName>
    <alternativeName>
        <fullName evidence="1">Lipid A 4'-kinase</fullName>
    </alternativeName>
</protein>
<feature type="chain" id="PRO_0000340845" description="Tetraacyldisaccharide 4'-kinase">
    <location>
        <begin position="1"/>
        <end position="314"/>
    </location>
</feature>
<feature type="binding site" evidence="1">
    <location>
        <begin position="54"/>
        <end position="61"/>
    </location>
    <ligand>
        <name>ATP</name>
        <dbReference type="ChEBI" id="CHEBI:30616"/>
    </ligand>
</feature>
<sequence>MKLKKPKFWDHKKPSFFSYLLLPFSIILGLITKIKSKPKFSNSKIKTICVGNIYIGGTGKTSLAIKIKEILDKNNIRACFIKKFYPNQTDEQKLLSKNGVLFSNLKRITALNEAISEGFEVAIFDDGLQDSTIKYDLEIVCFNNLNWIGNGLTLPSGPLRENINNLKSYENVFLNGNEESLIAIKEQIKRINPNININSGKYIPLNIDEFDKDQNYLVFSGIGNHKTFVEMLKNNKLKIVSDLEYPDHYQYSKKDFDEIIINAKKFNAHIITTEKDYLRLENLNKNEIFYVKSSLDISDEKNLTNKLIKLNEKN</sequence>
<name>LPXK_PELUB</name>
<gene>
    <name evidence="1" type="primary">lpxK</name>
    <name type="ordered locus">SAR11_0149</name>
</gene>
<comment type="function">
    <text evidence="1">Transfers the gamma-phosphate of ATP to the 4'-position of a tetraacyldisaccharide 1-phosphate intermediate (termed DS-1-P) to form tetraacyldisaccharide 1,4'-bis-phosphate (lipid IVA).</text>
</comment>
<comment type="catalytic activity">
    <reaction evidence="1">
        <text>a lipid A disaccharide + ATP = a lipid IVA + ADP + H(+)</text>
        <dbReference type="Rhea" id="RHEA:67840"/>
        <dbReference type="ChEBI" id="CHEBI:15378"/>
        <dbReference type="ChEBI" id="CHEBI:30616"/>
        <dbReference type="ChEBI" id="CHEBI:176343"/>
        <dbReference type="ChEBI" id="CHEBI:176425"/>
        <dbReference type="ChEBI" id="CHEBI:456216"/>
        <dbReference type="EC" id="2.7.1.130"/>
    </reaction>
</comment>
<comment type="pathway">
    <text evidence="1">Glycolipid biosynthesis; lipid IV(A) biosynthesis; lipid IV(A) from (3R)-3-hydroxytetradecanoyl-[acyl-carrier-protein] and UDP-N-acetyl-alpha-D-glucosamine: step 6/6.</text>
</comment>
<comment type="similarity">
    <text evidence="1">Belongs to the LpxK family.</text>
</comment>
<reference key="1">
    <citation type="journal article" date="2005" name="Science">
        <title>Genome streamlining in a cosmopolitan oceanic bacterium.</title>
        <authorList>
            <person name="Giovannoni S.J."/>
            <person name="Tripp H.J."/>
            <person name="Givan S."/>
            <person name="Podar M."/>
            <person name="Vergin K.L."/>
            <person name="Baptista D."/>
            <person name="Bibbs L."/>
            <person name="Eads J."/>
            <person name="Richardson T.H."/>
            <person name="Noordewier M."/>
            <person name="Rappe M.S."/>
            <person name="Short J.M."/>
            <person name="Carrington J.C."/>
            <person name="Mathur E.J."/>
        </authorList>
    </citation>
    <scope>NUCLEOTIDE SEQUENCE [LARGE SCALE GENOMIC DNA]</scope>
    <source>
        <strain>HTCC1062</strain>
    </source>
</reference>
<organism>
    <name type="scientific">Pelagibacter ubique (strain HTCC1062)</name>
    <dbReference type="NCBI Taxonomy" id="335992"/>
    <lineage>
        <taxon>Bacteria</taxon>
        <taxon>Pseudomonadati</taxon>
        <taxon>Pseudomonadota</taxon>
        <taxon>Alphaproteobacteria</taxon>
        <taxon>Candidatus Pelagibacterales</taxon>
        <taxon>Candidatus Pelagibacteraceae</taxon>
        <taxon>Candidatus Pelagibacter</taxon>
    </lineage>
</organism>
<accession>Q4FPB7</accession>
<keyword id="KW-0067">ATP-binding</keyword>
<keyword id="KW-0418">Kinase</keyword>
<keyword id="KW-0441">Lipid A biosynthesis</keyword>
<keyword id="KW-0444">Lipid biosynthesis</keyword>
<keyword id="KW-0443">Lipid metabolism</keyword>
<keyword id="KW-0547">Nucleotide-binding</keyword>
<keyword id="KW-1185">Reference proteome</keyword>
<keyword id="KW-0808">Transferase</keyword>
<proteinExistence type="inferred from homology"/>
<evidence type="ECO:0000255" key="1">
    <source>
        <dbReference type="HAMAP-Rule" id="MF_00409"/>
    </source>
</evidence>
<dbReference type="EC" id="2.7.1.130" evidence="1"/>
<dbReference type="EMBL" id="CP000084">
    <property type="protein sequence ID" value="AAZ20972.1"/>
    <property type="molecule type" value="Genomic_DNA"/>
</dbReference>
<dbReference type="RefSeq" id="WP_011281505.1">
    <property type="nucleotide sequence ID" value="NC_007205.1"/>
</dbReference>
<dbReference type="SMR" id="Q4FPB7"/>
<dbReference type="STRING" id="335992.SAR11_0149"/>
<dbReference type="GeneID" id="66294650"/>
<dbReference type="KEGG" id="pub:SAR11_0149"/>
<dbReference type="eggNOG" id="COG1663">
    <property type="taxonomic scope" value="Bacteria"/>
</dbReference>
<dbReference type="HOGENOM" id="CLU_038816_0_0_5"/>
<dbReference type="OrthoDB" id="9766423at2"/>
<dbReference type="UniPathway" id="UPA00359">
    <property type="reaction ID" value="UER00482"/>
</dbReference>
<dbReference type="Proteomes" id="UP000002528">
    <property type="component" value="Chromosome"/>
</dbReference>
<dbReference type="GO" id="GO:0005886">
    <property type="term" value="C:plasma membrane"/>
    <property type="evidence" value="ECO:0007669"/>
    <property type="project" value="TreeGrafter"/>
</dbReference>
<dbReference type="GO" id="GO:0005524">
    <property type="term" value="F:ATP binding"/>
    <property type="evidence" value="ECO:0007669"/>
    <property type="project" value="UniProtKB-UniRule"/>
</dbReference>
<dbReference type="GO" id="GO:0009029">
    <property type="term" value="F:tetraacyldisaccharide 4'-kinase activity"/>
    <property type="evidence" value="ECO:0007669"/>
    <property type="project" value="UniProtKB-UniRule"/>
</dbReference>
<dbReference type="GO" id="GO:0009245">
    <property type="term" value="P:lipid A biosynthetic process"/>
    <property type="evidence" value="ECO:0007669"/>
    <property type="project" value="UniProtKB-UniRule"/>
</dbReference>
<dbReference type="GO" id="GO:0009244">
    <property type="term" value="P:lipopolysaccharide core region biosynthetic process"/>
    <property type="evidence" value="ECO:0007669"/>
    <property type="project" value="TreeGrafter"/>
</dbReference>
<dbReference type="HAMAP" id="MF_00409">
    <property type="entry name" value="LpxK"/>
    <property type="match status" value="1"/>
</dbReference>
<dbReference type="InterPro" id="IPR003758">
    <property type="entry name" value="LpxK"/>
</dbReference>
<dbReference type="NCBIfam" id="TIGR00682">
    <property type="entry name" value="lpxK"/>
    <property type="match status" value="1"/>
</dbReference>
<dbReference type="PANTHER" id="PTHR42724">
    <property type="entry name" value="TETRAACYLDISACCHARIDE 4'-KINASE"/>
    <property type="match status" value="1"/>
</dbReference>
<dbReference type="PANTHER" id="PTHR42724:SF1">
    <property type="entry name" value="TETRAACYLDISACCHARIDE 4'-KINASE, MITOCHONDRIAL-RELATED"/>
    <property type="match status" value="1"/>
</dbReference>
<dbReference type="Pfam" id="PF02606">
    <property type="entry name" value="LpxK"/>
    <property type="match status" value="1"/>
</dbReference>